<sequence>MLLTLLKGKLHRARVTHADLHYEGSCGIDGDLLDLAGIRENESIDIYNVSNGKRFRTYAIRAEAGSGIISLNGAAAYMADLGDIVIICAYAQMDEQEADTHKPKLVYCNEDNTVKDTANIIPVQVS</sequence>
<feature type="chain" id="PRO_1000072353" description="Aspartate 1-decarboxylase beta chain" evidence="1">
    <location>
        <begin position="1"/>
        <end position="24"/>
    </location>
</feature>
<feature type="chain" id="PRO_1000072354" description="Aspartate 1-decarboxylase alpha chain" evidence="1">
    <location>
        <begin position="25"/>
        <end position="126"/>
    </location>
</feature>
<feature type="active site" description="Schiff-base intermediate with substrate; via pyruvic acid" evidence="1">
    <location>
        <position position="25"/>
    </location>
</feature>
<feature type="active site" description="Proton donor" evidence="1">
    <location>
        <position position="58"/>
    </location>
</feature>
<feature type="binding site" evidence="1">
    <location>
        <position position="57"/>
    </location>
    <ligand>
        <name>substrate</name>
    </ligand>
</feature>
<feature type="binding site" evidence="1">
    <location>
        <begin position="73"/>
        <end position="75"/>
    </location>
    <ligand>
        <name>substrate</name>
    </ligand>
</feature>
<feature type="modified residue" description="Pyruvic acid (Ser)" evidence="1">
    <location>
        <position position="25"/>
    </location>
</feature>
<organism>
    <name type="scientific">Psychrobacter sp. (strain PRwf-1)</name>
    <dbReference type="NCBI Taxonomy" id="349106"/>
    <lineage>
        <taxon>Bacteria</taxon>
        <taxon>Pseudomonadati</taxon>
        <taxon>Pseudomonadota</taxon>
        <taxon>Gammaproteobacteria</taxon>
        <taxon>Moraxellales</taxon>
        <taxon>Moraxellaceae</taxon>
        <taxon>Psychrobacter</taxon>
    </lineage>
</organism>
<reference key="1">
    <citation type="submission" date="2007-05" db="EMBL/GenBank/DDBJ databases">
        <title>Complete sequence of chromosome of Psychrobacter sp. PRwf-1.</title>
        <authorList>
            <consortium name="US DOE Joint Genome Institute"/>
            <person name="Copeland A."/>
            <person name="Lucas S."/>
            <person name="Lapidus A."/>
            <person name="Barry K."/>
            <person name="Detter J.C."/>
            <person name="Glavina del Rio T."/>
            <person name="Hammon N."/>
            <person name="Israni S."/>
            <person name="Dalin E."/>
            <person name="Tice H."/>
            <person name="Pitluck S."/>
            <person name="Chain P."/>
            <person name="Malfatti S."/>
            <person name="Shin M."/>
            <person name="Vergez L."/>
            <person name="Schmutz J."/>
            <person name="Larimer F."/>
            <person name="Land M."/>
            <person name="Hauser L."/>
            <person name="Kyrpides N."/>
            <person name="Kim E."/>
            <person name="Tiedje J."/>
            <person name="Richardson P."/>
        </authorList>
    </citation>
    <scope>NUCLEOTIDE SEQUENCE [LARGE SCALE GENOMIC DNA]</scope>
    <source>
        <strain>PRwf-1</strain>
    </source>
</reference>
<accession>A5WHA7</accession>
<proteinExistence type="inferred from homology"/>
<dbReference type="EC" id="4.1.1.11" evidence="1"/>
<dbReference type="EMBL" id="CP000713">
    <property type="protein sequence ID" value="ABQ95048.1"/>
    <property type="molecule type" value="Genomic_DNA"/>
</dbReference>
<dbReference type="SMR" id="A5WHA7"/>
<dbReference type="STRING" id="349106.PsycPRwf_2108"/>
<dbReference type="KEGG" id="prw:PsycPRwf_2108"/>
<dbReference type="eggNOG" id="COG0853">
    <property type="taxonomic scope" value="Bacteria"/>
</dbReference>
<dbReference type="HOGENOM" id="CLU_115305_2_1_6"/>
<dbReference type="UniPathway" id="UPA00028">
    <property type="reaction ID" value="UER00002"/>
</dbReference>
<dbReference type="GO" id="GO:0005829">
    <property type="term" value="C:cytosol"/>
    <property type="evidence" value="ECO:0007669"/>
    <property type="project" value="TreeGrafter"/>
</dbReference>
<dbReference type="GO" id="GO:0004068">
    <property type="term" value="F:aspartate 1-decarboxylase activity"/>
    <property type="evidence" value="ECO:0007669"/>
    <property type="project" value="UniProtKB-UniRule"/>
</dbReference>
<dbReference type="GO" id="GO:0006523">
    <property type="term" value="P:alanine biosynthetic process"/>
    <property type="evidence" value="ECO:0007669"/>
    <property type="project" value="InterPro"/>
</dbReference>
<dbReference type="GO" id="GO:0015940">
    <property type="term" value="P:pantothenate biosynthetic process"/>
    <property type="evidence" value="ECO:0007669"/>
    <property type="project" value="UniProtKB-UniRule"/>
</dbReference>
<dbReference type="CDD" id="cd06919">
    <property type="entry name" value="Asp_decarbox"/>
    <property type="match status" value="1"/>
</dbReference>
<dbReference type="Gene3D" id="2.40.40.20">
    <property type="match status" value="1"/>
</dbReference>
<dbReference type="HAMAP" id="MF_00446">
    <property type="entry name" value="PanD"/>
    <property type="match status" value="1"/>
</dbReference>
<dbReference type="InterPro" id="IPR009010">
    <property type="entry name" value="Asp_de-COase-like_dom_sf"/>
</dbReference>
<dbReference type="InterPro" id="IPR003190">
    <property type="entry name" value="Asp_decarbox"/>
</dbReference>
<dbReference type="NCBIfam" id="TIGR00223">
    <property type="entry name" value="panD"/>
    <property type="match status" value="1"/>
</dbReference>
<dbReference type="PANTHER" id="PTHR21012">
    <property type="entry name" value="ASPARTATE 1-DECARBOXYLASE"/>
    <property type="match status" value="1"/>
</dbReference>
<dbReference type="PANTHER" id="PTHR21012:SF0">
    <property type="entry name" value="ASPARTATE 1-DECARBOXYLASE"/>
    <property type="match status" value="1"/>
</dbReference>
<dbReference type="Pfam" id="PF02261">
    <property type="entry name" value="Asp_decarbox"/>
    <property type="match status" value="1"/>
</dbReference>
<dbReference type="PIRSF" id="PIRSF006246">
    <property type="entry name" value="Asp_decarbox"/>
    <property type="match status" value="1"/>
</dbReference>
<dbReference type="SUPFAM" id="SSF50692">
    <property type="entry name" value="ADC-like"/>
    <property type="match status" value="1"/>
</dbReference>
<comment type="function">
    <text evidence="1">Catalyzes the pyruvoyl-dependent decarboxylation of aspartate to produce beta-alanine.</text>
</comment>
<comment type="catalytic activity">
    <reaction evidence="1">
        <text>L-aspartate + H(+) = beta-alanine + CO2</text>
        <dbReference type="Rhea" id="RHEA:19497"/>
        <dbReference type="ChEBI" id="CHEBI:15378"/>
        <dbReference type="ChEBI" id="CHEBI:16526"/>
        <dbReference type="ChEBI" id="CHEBI:29991"/>
        <dbReference type="ChEBI" id="CHEBI:57966"/>
        <dbReference type="EC" id="4.1.1.11"/>
    </reaction>
</comment>
<comment type="cofactor">
    <cofactor evidence="1">
        <name>pyruvate</name>
        <dbReference type="ChEBI" id="CHEBI:15361"/>
    </cofactor>
    <text evidence="1">Binds 1 pyruvoyl group covalently per subunit.</text>
</comment>
<comment type="pathway">
    <text evidence="1">Cofactor biosynthesis; (R)-pantothenate biosynthesis; beta-alanine from L-aspartate: step 1/1.</text>
</comment>
<comment type="subunit">
    <text evidence="1">Heterooctamer of four alpha and four beta subunits.</text>
</comment>
<comment type="subcellular location">
    <subcellularLocation>
        <location evidence="1">Cytoplasm</location>
    </subcellularLocation>
</comment>
<comment type="PTM">
    <text evidence="1">Is synthesized initially as an inactive proenzyme, which is activated by self-cleavage at a specific serine bond to produce a beta-subunit with a hydroxyl group at its C-terminus and an alpha-subunit with a pyruvoyl group at its N-terminus.</text>
</comment>
<comment type="similarity">
    <text evidence="1">Belongs to the PanD family.</text>
</comment>
<protein>
    <recommendedName>
        <fullName evidence="1">Aspartate 1-decarboxylase</fullName>
        <ecNumber evidence="1">4.1.1.11</ecNumber>
    </recommendedName>
    <alternativeName>
        <fullName evidence="1">Aspartate alpha-decarboxylase</fullName>
    </alternativeName>
    <component>
        <recommendedName>
            <fullName evidence="1">Aspartate 1-decarboxylase beta chain</fullName>
        </recommendedName>
    </component>
    <component>
        <recommendedName>
            <fullName evidence="1">Aspartate 1-decarboxylase alpha chain</fullName>
        </recommendedName>
    </component>
</protein>
<evidence type="ECO:0000255" key="1">
    <source>
        <dbReference type="HAMAP-Rule" id="MF_00446"/>
    </source>
</evidence>
<name>PAND_PSYWF</name>
<gene>
    <name evidence="1" type="primary">panD</name>
    <name type="ordered locus">PsycPRwf_2108</name>
</gene>
<keyword id="KW-0068">Autocatalytic cleavage</keyword>
<keyword id="KW-0963">Cytoplasm</keyword>
<keyword id="KW-0210">Decarboxylase</keyword>
<keyword id="KW-0456">Lyase</keyword>
<keyword id="KW-0566">Pantothenate biosynthesis</keyword>
<keyword id="KW-0670">Pyruvate</keyword>
<keyword id="KW-0704">Schiff base</keyword>
<keyword id="KW-0865">Zymogen</keyword>